<reference key="1">
    <citation type="submission" date="2006-06" db="EMBL/GenBank/DDBJ databases">
        <title>Complete sequence of chromosome of Mycobacterium sp. MCS.</title>
        <authorList>
            <consortium name="US DOE Joint Genome Institute"/>
            <person name="Copeland A."/>
            <person name="Lucas S."/>
            <person name="Lapidus A."/>
            <person name="Barry K."/>
            <person name="Detter J.C."/>
            <person name="Glavina del Rio T."/>
            <person name="Hammon N."/>
            <person name="Israni S."/>
            <person name="Dalin E."/>
            <person name="Tice H."/>
            <person name="Pitluck S."/>
            <person name="Martinez M."/>
            <person name="Schmutz J."/>
            <person name="Larimer F."/>
            <person name="Land M."/>
            <person name="Hauser L."/>
            <person name="Kyrpides N."/>
            <person name="Kim E."/>
            <person name="Miller C.D."/>
            <person name="Hughes J.E."/>
            <person name="Anderson A.J."/>
            <person name="Sims R.C."/>
            <person name="Richardson P."/>
        </authorList>
    </citation>
    <scope>NUCLEOTIDE SEQUENCE [LARGE SCALE GENOMIC DNA]</scope>
    <source>
        <strain>MCS</strain>
    </source>
</reference>
<organism>
    <name type="scientific">Mycobacterium sp. (strain MCS)</name>
    <dbReference type="NCBI Taxonomy" id="164756"/>
    <lineage>
        <taxon>Bacteria</taxon>
        <taxon>Bacillati</taxon>
        <taxon>Actinomycetota</taxon>
        <taxon>Actinomycetes</taxon>
        <taxon>Mycobacteriales</taxon>
        <taxon>Mycobacteriaceae</taxon>
        <taxon>Mycobacterium</taxon>
    </lineage>
</organism>
<evidence type="ECO:0000255" key="1">
    <source>
        <dbReference type="HAMAP-Rule" id="MF_00087"/>
    </source>
</evidence>
<feature type="chain" id="PRO_1000004650" description="Glutamyl-tRNA reductase">
    <location>
        <begin position="1"/>
        <end position="447"/>
    </location>
</feature>
<feature type="active site" description="Nucleophile" evidence="1">
    <location>
        <position position="50"/>
    </location>
</feature>
<feature type="binding site" evidence="1">
    <location>
        <begin position="49"/>
        <end position="52"/>
    </location>
    <ligand>
        <name>substrate</name>
    </ligand>
</feature>
<feature type="binding site" evidence="1">
    <location>
        <position position="109"/>
    </location>
    <ligand>
        <name>substrate</name>
    </ligand>
</feature>
<feature type="binding site" evidence="1">
    <location>
        <begin position="114"/>
        <end position="116"/>
    </location>
    <ligand>
        <name>substrate</name>
    </ligand>
</feature>
<feature type="binding site" evidence="1">
    <location>
        <position position="120"/>
    </location>
    <ligand>
        <name>substrate</name>
    </ligand>
</feature>
<feature type="binding site" evidence="1">
    <location>
        <begin position="189"/>
        <end position="194"/>
    </location>
    <ligand>
        <name>NADP(+)</name>
        <dbReference type="ChEBI" id="CHEBI:58349"/>
    </ligand>
</feature>
<feature type="site" description="Important for activity" evidence="1">
    <location>
        <position position="99"/>
    </location>
</feature>
<comment type="function">
    <text evidence="1">Catalyzes the NADPH-dependent reduction of glutamyl-tRNA(Glu) to glutamate 1-semialdehyde (GSA).</text>
</comment>
<comment type="catalytic activity">
    <reaction evidence="1">
        <text>(S)-4-amino-5-oxopentanoate + tRNA(Glu) + NADP(+) = L-glutamyl-tRNA(Glu) + NADPH + H(+)</text>
        <dbReference type="Rhea" id="RHEA:12344"/>
        <dbReference type="Rhea" id="RHEA-COMP:9663"/>
        <dbReference type="Rhea" id="RHEA-COMP:9680"/>
        <dbReference type="ChEBI" id="CHEBI:15378"/>
        <dbReference type="ChEBI" id="CHEBI:57501"/>
        <dbReference type="ChEBI" id="CHEBI:57783"/>
        <dbReference type="ChEBI" id="CHEBI:58349"/>
        <dbReference type="ChEBI" id="CHEBI:78442"/>
        <dbReference type="ChEBI" id="CHEBI:78520"/>
        <dbReference type="EC" id="1.2.1.70"/>
    </reaction>
</comment>
<comment type="pathway">
    <text evidence="1">Porphyrin-containing compound metabolism; protoporphyrin-IX biosynthesis; 5-aminolevulinate from L-glutamyl-tRNA(Glu): step 1/2.</text>
</comment>
<comment type="subunit">
    <text evidence="1">Homodimer.</text>
</comment>
<comment type="domain">
    <text evidence="1">Possesses an unusual extended V-shaped dimeric structure with each monomer consisting of three distinct domains arranged along a curved 'spinal' alpha-helix. The N-terminal catalytic domain specifically recognizes the glutamate moiety of the substrate. The second domain is the NADPH-binding domain, and the third C-terminal domain is responsible for dimerization.</text>
</comment>
<comment type="miscellaneous">
    <text evidence="1">During catalysis, the active site Cys acts as a nucleophile attacking the alpha-carbonyl group of tRNA-bound glutamate with the formation of a thioester intermediate between enzyme and glutamate, and the concomitant release of tRNA(Glu). The thioester intermediate is finally reduced by direct hydride transfer from NADPH, to form the product GSA.</text>
</comment>
<comment type="similarity">
    <text evidence="1">Belongs to the glutamyl-tRNA reductase family.</text>
</comment>
<sequence length="447" mass="47273">MSVLLFGVSHRSAPVSVLEQLSTDESDQAKIVDQVLQSSLVTEAMVLSTCNRVEVYAVVDAFHGGLSVIGQVLAEHCGMSLNDLTKYAYVRYAEAAVEHLFAVASGLDSAVIGEQQVLGQVRRAYTSAEANHTVGRTLHELSQRALSVGKRVHSETGIDAAGASVVSVALDIAEAKLGSLAGRTAVVIGAGSMGALSAKHLVRAGIERVHVVNRSLPRARRLAQSLLDQGVTADAHTLDDIAHALADADVVITSTGAVRPVVSLADAHRGLTGRPEHRRLVICDLGMPRDVEPAIAGLPGVNVIDMERIQREPSARAAASDADAARSIVAAEVANYLAGQRMAEVTPTVTALRQRAADVVEAELLRLDNRLPELDAAHRAEVAKTVRRVVDKLLHAPTVRVKQLASAPGGDSYAEALRELFELDQQAVDAVAAGELPLLPIELDKSE</sequence>
<dbReference type="EC" id="1.2.1.70" evidence="1"/>
<dbReference type="EMBL" id="CP000384">
    <property type="protein sequence ID" value="ABG06797.1"/>
    <property type="molecule type" value="Genomic_DNA"/>
</dbReference>
<dbReference type="SMR" id="Q1BE87"/>
<dbReference type="KEGG" id="mmc:Mmcs_0676"/>
<dbReference type="HOGENOM" id="CLU_035113_4_0_11"/>
<dbReference type="BioCyc" id="MSP164756:G1G6O-690-MONOMER"/>
<dbReference type="UniPathway" id="UPA00251">
    <property type="reaction ID" value="UER00316"/>
</dbReference>
<dbReference type="GO" id="GO:0008883">
    <property type="term" value="F:glutamyl-tRNA reductase activity"/>
    <property type="evidence" value="ECO:0007669"/>
    <property type="project" value="UniProtKB-UniRule"/>
</dbReference>
<dbReference type="GO" id="GO:0050661">
    <property type="term" value="F:NADP binding"/>
    <property type="evidence" value="ECO:0007669"/>
    <property type="project" value="InterPro"/>
</dbReference>
<dbReference type="GO" id="GO:0019353">
    <property type="term" value="P:protoporphyrinogen IX biosynthetic process from glutamate"/>
    <property type="evidence" value="ECO:0007669"/>
    <property type="project" value="TreeGrafter"/>
</dbReference>
<dbReference type="CDD" id="cd05213">
    <property type="entry name" value="NAD_bind_Glutamyl_tRNA_reduct"/>
    <property type="match status" value="1"/>
</dbReference>
<dbReference type="FunFam" id="3.30.460.30:FF:000001">
    <property type="entry name" value="Glutamyl-tRNA reductase"/>
    <property type="match status" value="1"/>
</dbReference>
<dbReference type="Gene3D" id="3.30.460.30">
    <property type="entry name" value="Glutamyl-tRNA reductase, N-terminal domain"/>
    <property type="match status" value="1"/>
</dbReference>
<dbReference type="Gene3D" id="3.40.50.720">
    <property type="entry name" value="NAD(P)-binding Rossmann-like Domain"/>
    <property type="match status" value="1"/>
</dbReference>
<dbReference type="HAMAP" id="MF_00087">
    <property type="entry name" value="Glu_tRNA_reductase"/>
    <property type="match status" value="1"/>
</dbReference>
<dbReference type="InterPro" id="IPR000343">
    <property type="entry name" value="4pyrrol_synth_GluRdtase"/>
</dbReference>
<dbReference type="InterPro" id="IPR015896">
    <property type="entry name" value="4pyrrol_synth_GluRdtase_dimer"/>
</dbReference>
<dbReference type="InterPro" id="IPR015895">
    <property type="entry name" value="4pyrrol_synth_GluRdtase_N"/>
</dbReference>
<dbReference type="InterPro" id="IPR018214">
    <property type="entry name" value="GluRdtase_CS"/>
</dbReference>
<dbReference type="InterPro" id="IPR036453">
    <property type="entry name" value="GluRdtase_dimer_dom_sf"/>
</dbReference>
<dbReference type="InterPro" id="IPR036343">
    <property type="entry name" value="GluRdtase_N_sf"/>
</dbReference>
<dbReference type="InterPro" id="IPR036291">
    <property type="entry name" value="NAD(P)-bd_dom_sf"/>
</dbReference>
<dbReference type="InterPro" id="IPR006151">
    <property type="entry name" value="Shikm_DH/Glu-tRNA_Rdtase"/>
</dbReference>
<dbReference type="NCBIfam" id="TIGR01035">
    <property type="entry name" value="hemA"/>
    <property type="match status" value="1"/>
</dbReference>
<dbReference type="NCBIfam" id="NF000744">
    <property type="entry name" value="PRK00045.1-3"/>
    <property type="match status" value="1"/>
</dbReference>
<dbReference type="PANTHER" id="PTHR43013">
    <property type="entry name" value="GLUTAMYL-TRNA REDUCTASE"/>
    <property type="match status" value="1"/>
</dbReference>
<dbReference type="PANTHER" id="PTHR43013:SF1">
    <property type="entry name" value="GLUTAMYL-TRNA REDUCTASE"/>
    <property type="match status" value="1"/>
</dbReference>
<dbReference type="Pfam" id="PF00745">
    <property type="entry name" value="GlutR_dimer"/>
    <property type="match status" value="1"/>
</dbReference>
<dbReference type="Pfam" id="PF05201">
    <property type="entry name" value="GlutR_N"/>
    <property type="match status" value="1"/>
</dbReference>
<dbReference type="Pfam" id="PF01488">
    <property type="entry name" value="Shikimate_DH"/>
    <property type="match status" value="1"/>
</dbReference>
<dbReference type="PIRSF" id="PIRSF000445">
    <property type="entry name" value="4pyrrol_synth_GluRdtase"/>
    <property type="match status" value="1"/>
</dbReference>
<dbReference type="SUPFAM" id="SSF69742">
    <property type="entry name" value="Glutamyl tRNA-reductase catalytic, N-terminal domain"/>
    <property type="match status" value="1"/>
</dbReference>
<dbReference type="SUPFAM" id="SSF69075">
    <property type="entry name" value="Glutamyl tRNA-reductase dimerization domain"/>
    <property type="match status" value="1"/>
</dbReference>
<dbReference type="SUPFAM" id="SSF51735">
    <property type="entry name" value="NAD(P)-binding Rossmann-fold domains"/>
    <property type="match status" value="1"/>
</dbReference>
<dbReference type="PROSITE" id="PS00747">
    <property type="entry name" value="GLUTR"/>
    <property type="match status" value="1"/>
</dbReference>
<gene>
    <name evidence="1" type="primary">hemA</name>
    <name type="ordered locus">Mmcs_0676</name>
</gene>
<accession>Q1BE87</accession>
<proteinExistence type="inferred from homology"/>
<keyword id="KW-0521">NADP</keyword>
<keyword id="KW-0560">Oxidoreductase</keyword>
<keyword id="KW-0627">Porphyrin biosynthesis</keyword>
<protein>
    <recommendedName>
        <fullName evidence="1">Glutamyl-tRNA reductase</fullName>
        <shortName evidence="1">GluTR</shortName>
        <ecNumber evidence="1">1.2.1.70</ecNumber>
    </recommendedName>
</protein>
<name>HEM1_MYCSS</name>